<feature type="chain" id="PRO_1000133219" description="Met repressor">
    <location>
        <begin position="1"/>
        <end position="105"/>
    </location>
</feature>
<comment type="function">
    <text evidence="1">This regulatory protein, when combined with SAM (S-adenosylmethionine) represses the expression of the methionine regulon and of enzymes involved in SAM synthesis.</text>
</comment>
<comment type="subunit">
    <text evidence="1">Homodimer.</text>
</comment>
<comment type="subcellular location">
    <subcellularLocation>
        <location evidence="1">Cytoplasm</location>
    </subcellularLocation>
</comment>
<comment type="domain">
    <text>Does not bind DNA by a helix-turn-helix motif.</text>
</comment>
<comment type="similarity">
    <text evidence="1">Belongs to the MetJ family.</text>
</comment>
<protein>
    <recommendedName>
        <fullName evidence="1">Met repressor</fullName>
    </recommendedName>
    <alternativeName>
        <fullName evidence="1">Met regulon regulatory protein MetJ</fullName>
    </alternativeName>
</protein>
<reference key="1">
    <citation type="journal article" date="2011" name="J. Bacteriol.">
        <title>Comparative genomics of 28 Salmonella enterica isolates: evidence for CRISPR-mediated adaptive sublineage evolution.</title>
        <authorList>
            <person name="Fricke W.F."/>
            <person name="Mammel M.K."/>
            <person name="McDermott P.F."/>
            <person name="Tartera C."/>
            <person name="White D.G."/>
            <person name="Leclerc J.E."/>
            <person name="Ravel J."/>
            <person name="Cebula T.A."/>
        </authorList>
    </citation>
    <scope>NUCLEOTIDE SEQUENCE [LARGE SCALE GENOMIC DNA]</scope>
    <source>
        <strain>SL476</strain>
    </source>
</reference>
<keyword id="KW-0028">Amino-acid biosynthesis</keyword>
<keyword id="KW-0963">Cytoplasm</keyword>
<keyword id="KW-0238">DNA-binding</keyword>
<keyword id="KW-0486">Methionine biosynthesis</keyword>
<keyword id="KW-0678">Repressor</keyword>
<keyword id="KW-0804">Transcription</keyword>
<keyword id="KW-0805">Transcription regulation</keyword>
<name>METJ_SALHS</name>
<organism>
    <name type="scientific">Salmonella heidelberg (strain SL476)</name>
    <dbReference type="NCBI Taxonomy" id="454169"/>
    <lineage>
        <taxon>Bacteria</taxon>
        <taxon>Pseudomonadati</taxon>
        <taxon>Pseudomonadota</taxon>
        <taxon>Gammaproteobacteria</taxon>
        <taxon>Enterobacterales</taxon>
        <taxon>Enterobacteriaceae</taxon>
        <taxon>Salmonella</taxon>
    </lineage>
</organism>
<gene>
    <name evidence="1" type="primary">metJ</name>
    <name type="ordered locus">SeHA_C4433</name>
</gene>
<sequence length="105" mass="12142">MAEWSGEYISPYAEHGKKSEQVKKITVSIPLKVLKILTDERTRRQVNNLRHATNSELLCEAFLHAFTGQPLPDDADLRKERSDEIPEAAKEIMREMGIDPETWEY</sequence>
<accession>B4TCN8</accession>
<evidence type="ECO:0000255" key="1">
    <source>
        <dbReference type="HAMAP-Rule" id="MF_00744"/>
    </source>
</evidence>
<proteinExistence type="inferred from homology"/>
<dbReference type="EMBL" id="CP001120">
    <property type="protein sequence ID" value="ACF69808.1"/>
    <property type="molecule type" value="Genomic_DNA"/>
</dbReference>
<dbReference type="RefSeq" id="WP_000852811.1">
    <property type="nucleotide sequence ID" value="NC_011083.1"/>
</dbReference>
<dbReference type="SMR" id="B4TCN8"/>
<dbReference type="GeneID" id="66758351"/>
<dbReference type="KEGG" id="seh:SeHA_C4433"/>
<dbReference type="HOGENOM" id="CLU_142318_0_0_6"/>
<dbReference type="Proteomes" id="UP000001866">
    <property type="component" value="Chromosome"/>
</dbReference>
<dbReference type="GO" id="GO:0005737">
    <property type="term" value="C:cytoplasm"/>
    <property type="evidence" value="ECO:0007669"/>
    <property type="project" value="UniProtKB-SubCell"/>
</dbReference>
<dbReference type="GO" id="GO:0003677">
    <property type="term" value="F:DNA binding"/>
    <property type="evidence" value="ECO:0007669"/>
    <property type="project" value="UniProtKB-KW"/>
</dbReference>
<dbReference type="GO" id="GO:0003700">
    <property type="term" value="F:DNA-binding transcription factor activity"/>
    <property type="evidence" value="ECO:0007669"/>
    <property type="project" value="InterPro"/>
</dbReference>
<dbReference type="GO" id="GO:0009086">
    <property type="term" value="P:methionine biosynthetic process"/>
    <property type="evidence" value="ECO:0007669"/>
    <property type="project" value="UniProtKB-UniRule"/>
</dbReference>
<dbReference type="GO" id="GO:0045892">
    <property type="term" value="P:negative regulation of DNA-templated transcription"/>
    <property type="evidence" value="ECO:0007669"/>
    <property type="project" value="UniProtKB-UniRule"/>
</dbReference>
<dbReference type="CDD" id="cd00490">
    <property type="entry name" value="Met_repressor_MetJ"/>
    <property type="match status" value="1"/>
</dbReference>
<dbReference type="FunFam" id="1.10.140.10:FF:000001">
    <property type="entry name" value="Met repressor"/>
    <property type="match status" value="1"/>
</dbReference>
<dbReference type="Gene3D" id="1.10.140.10">
    <property type="entry name" value="MET Apo-Repressor, subunit A"/>
    <property type="match status" value="1"/>
</dbReference>
<dbReference type="HAMAP" id="MF_00744">
    <property type="entry name" value="MetJ"/>
    <property type="match status" value="1"/>
</dbReference>
<dbReference type="InterPro" id="IPR002084">
    <property type="entry name" value="Met_repressor_MetJ"/>
</dbReference>
<dbReference type="InterPro" id="IPR023453">
    <property type="entry name" value="Met_repressor_MetJ_dom_sf"/>
</dbReference>
<dbReference type="InterPro" id="IPR010985">
    <property type="entry name" value="Ribbon_hlx_hlx"/>
</dbReference>
<dbReference type="NCBIfam" id="NF003622">
    <property type="entry name" value="PRK05264.1"/>
    <property type="match status" value="1"/>
</dbReference>
<dbReference type="Pfam" id="PF01340">
    <property type="entry name" value="MetJ"/>
    <property type="match status" value="1"/>
</dbReference>
<dbReference type="SUPFAM" id="SSF47598">
    <property type="entry name" value="Ribbon-helix-helix"/>
    <property type="match status" value="1"/>
</dbReference>